<evidence type="ECO:0000255" key="1">
    <source>
        <dbReference type="PROSITE-ProRule" id="PRU00167"/>
    </source>
</evidence>
<evidence type="ECO:0000256" key="2">
    <source>
        <dbReference type="SAM" id="MobiDB-lite"/>
    </source>
</evidence>
<evidence type="ECO:0000269" key="3">
    <source>
    </source>
</evidence>
<evidence type="ECO:0000305" key="4"/>
<evidence type="ECO:0007744" key="5">
    <source>
    </source>
</evidence>
<comment type="function">
    <text>Inhibitory regulator of the Ras-cyclic AMP pathway. Stimulates the GTPase activity of Ras proteins.</text>
</comment>
<comment type="subcellular location">
    <subcellularLocation>
        <location evidence="3">Cytoplasm</location>
    </subcellularLocation>
</comment>
<gene>
    <name type="primary">IRA2</name>
    <name type="synonym">CCS1</name>
    <name type="synonym">GLC4</name>
    <name type="ordered locus">YOL081W</name>
    <name type="ORF">O0985</name>
</gene>
<feature type="chain" id="PRO_0000056658" description="Inhibitory regulator protein IRA2">
    <location>
        <begin position="1"/>
        <end position="3079"/>
    </location>
</feature>
<feature type="domain" description="Ras-GAP" evidence="1">
    <location>
        <begin position="1717"/>
        <end position="1922"/>
    </location>
</feature>
<feature type="region of interest" description="Disordered" evidence="2">
    <location>
        <begin position="392"/>
        <end position="554"/>
    </location>
</feature>
<feature type="region of interest" description="Disordered" evidence="2">
    <location>
        <begin position="867"/>
        <end position="898"/>
    </location>
</feature>
<feature type="region of interest" description="Disordered" evidence="2">
    <location>
        <begin position="912"/>
        <end position="935"/>
    </location>
</feature>
<feature type="region of interest" description="Disordered" evidence="2">
    <location>
        <begin position="952"/>
        <end position="980"/>
    </location>
</feature>
<feature type="compositionally biased region" description="Low complexity" evidence="2">
    <location>
        <begin position="399"/>
        <end position="416"/>
    </location>
</feature>
<feature type="compositionally biased region" description="Polar residues" evidence="2">
    <location>
        <begin position="417"/>
        <end position="442"/>
    </location>
</feature>
<feature type="compositionally biased region" description="Low complexity" evidence="2">
    <location>
        <begin position="449"/>
        <end position="477"/>
    </location>
</feature>
<feature type="compositionally biased region" description="Polar residues" evidence="2">
    <location>
        <begin position="488"/>
        <end position="497"/>
    </location>
</feature>
<feature type="compositionally biased region" description="Low complexity" evidence="2">
    <location>
        <begin position="498"/>
        <end position="528"/>
    </location>
</feature>
<feature type="compositionally biased region" description="Polar residues" evidence="2">
    <location>
        <begin position="529"/>
        <end position="546"/>
    </location>
</feature>
<feature type="compositionally biased region" description="Low complexity" evidence="2">
    <location>
        <begin position="873"/>
        <end position="894"/>
    </location>
</feature>
<feature type="compositionally biased region" description="Low complexity" evidence="2">
    <location>
        <begin position="921"/>
        <end position="934"/>
    </location>
</feature>
<feature type="compositionally biased region" description="Polar residues" evidence="2">
    <location>
        <begin position="961"/>
        <end position="980"/>
    </location>
</feature>
<feature type="site" description="Arginine finger; crucial for GTP hydrolysis by stabilizing the transition state" evidence="1">
    <location>
        <position position="1742"/>
    </location>
</feature>
<feature type="modified residue" description="Phosphothreonine" evidence="5">
    <location>
        <position position="635"/>
    </location>
</feature>
<feature type="sequence conflict" description="In Ref. 1; AAA34710." evidence="4" ref="1">
    <original>D</original>
    <variation>V</variation>
    <location>
        <position position="2309"/>
    </location>
</feature>
<feature type="sequence conflict" description="In Ref. 1; AAA34710." evidence="4" ref="1">
    <original>K</original>
    <variation>I</variation>
    <location>
        <position position="2317"/>
    </location>
</feature>
<reference key="1">
    <citation type="journal article" date="1990" name="Mol. Cell. Biol.">
        <title>IRA2, a second gene of Saccharomyces cerevisiae that encodes a protein with a domain homologous to mammalian ras GTPase-activating protein.</title>
        <authorList>
            <person name="Tanaka K."/>
            <person name="Nakafuku M."/>
            <person name="Tamanoi F."/>
            <person name="Kaziro Y."/>
            <person name="Matsumoto K."/>
            <person name="Toh-e A."/>
        </authorList>
    </citation>
    <scope>NUCLEOTIDE SEQUENCE [GENOMIC DNA]</scope>
</reference>
<reference key="2">
    <citation type="journal article" date="1997" name="Nature">
        <title>The nucleotide sequence of Saccharomyces cerevisiae chromosome XV.</title>
        <authorList>
            <person name="Dujon B."/>
            <person name="Albermann K."/>
            <person name="Aldea M."/>
            <person name="Alexandraki D."/>
            <person name="Ansorge W."/>
            <person name="Arino J."/>
            <person name="Benes V."/>
            <person name="Bohn C."/>
            <person name="Bolotin-Fukuhara M."/>
            <person name="Bordonne R."/>
            <person name="Boyer J."/>
            <person name="Camasses A."/>
            <person name="Casamayor A."/>
            <person name="Casas C."/>
            <person name="Cheret G."/>
            <person name="Cziepluch C."/>
            <person name="Daignan-Fornier B."/>
            <person name="Dang V.-D."/>
            <person name="de Haan M."/>
            <person name="Delius H."/>
            <person name="Durand P."/>
            <person name="Fairhead C."/>
            <person name="Feldmann H."/>
            <person name="Gaillon L."/>
            <person name="Galisson F."/>
            <person name="Gamo F.-J."/>
            <person name="Gancedo C."/>
            <person name="Goffeau A."/>
            <person name="Goulding S.E."/>
            <person name="Grivell L.A."/>
            <person name="Habbig B."/>
            <person name="Hand N.J."/>
            <person name="Hani J."/>
            <person name="Hattenhorst U."/>
            <person name="Hebling U."/>
            <person name="Hernando Y."/>
            <person name="Herrero E."/>
            <person name="Heumann K."/>
            <person name="Hiesel R."/>
            <person name="Hilger F."/>
            <person name="Hofmann B."/>
            <person name="Hollenberg C.P."/>
            <person name="Hughes B."/>
            <person name="Jauniaux J.-C."/>
            <person name="Kalogeropoulos A."/>
            <person name="Katsoulou C."/>
            <person name="Kordes E."/>
            <person name="Lafuente M.J."/>
            <person name="Landt O."/>
            <person name="Louis E.J."/>
            <person name="Maarse A.C."/>
            <person name="Madania A."/>
            <person name="Mannhaupt G."/>
            <person name="Marck C."/>
            <person name="Martin R.P."/>
            <person name="Mewes H.-W."/>
            <person name="Michaux G."/>
            <person name="Paces V."/>
            <person name="Parle-McDermott A.G."/>
            <person name="Pearson B.M."/>
            <person name="Perrin A."/>
            <person name="Pettersson B."/>
            <person name="Poch O."/>
            <person name="Pohl T.M."/>
            <person name="Poirey R."/>
            <person name="Portetelle D."/>
            <person name="Pujol A."/>
            <person name="Purnelle B."/>
            <person name="Ramezani Rad M."/>
            <person name="Rechmann S."/>
            <person name="Schwager C."/>
            <person name="Schweizer M."/>
            <person name="Sor F."/>
            <person name="Sterky F."/>
            <person name="Tarassov I.A."/>
            <person name="Teodoru C."/>
            <person name="Tettelin H."/>
            <person name="Thierry A."/>
            <person name="Tobiasch E."/>
            <person name="Tzermia M."/>
            <person name="Uhlen M."/>
            <person name="Unseld M."/>
            <person name="Valens M."/>
            <person name="Vandenbol M."/>
            <person name="Vetter I."/>
            <person name="Vlcek C."/>
            <person name="Voet M."/>
            <person name="Volckaert G."/>
            <person name="Voss H."/>
            <person name="Wambutt R."/>
            <person name="Wedler H."/>
            <person name="Wiemann S."/>
            <person name="Winsor B."/>
            <person name="Wolfe K.H."/>
            <person name="Zollner A."/>
            <person name="Zumstein E."/>
            <person name="Kleine K."/>
        </authorList>
    </citation>
    <scope>NUCLEOTIDE SEQUENCE [LARGE SCALE GENOMIC DNA]</scope>
    <source>
        <strain>ATCC 204508 / S288c</strain>
    </source>
</reference>
<reference key="3">
    <citation type="journal article" date="2014" name="G3 (Bethesda)">
        <title>The reference genome sequence of Saccharomyces cerevisiae: Then and now.</title>
        <authorList>
            <person name="Engel S.R."/>
            <person name="Dietrich F.S."/>
            <person name="Fisk D.G."/>
            <person name="Binkley G."/>
            <person name="Balakrishnan R."/>
            <person name="Costanzo M.C."/>
            <person name="Dwight S.S."/>
            <person name="Hitz B.C."/>
            <person name="Karra K."/>
            <person name="Nash R.S."/>
            <person name="Weng S."/>
            <person name="Wong E.D."/>
            <person name="Lloyd P."/>
            <person name="Skrzypek M.S."/>
            <person name="Miyasato S.R."/>
            <person name="Simison M."/>
            <person name="Cherry J.M."/>
        </authorList>
    </citation>
    <scope>GENOME REANNOTATION</scope>
    <source>
        <strain>ATCC 204508 / S288c</strain>
    </source>
</reference>
<reference key="4">
    <citation type="journal article" date="1994" name="Yeast">
        <title>Sequence of a 10.27 kb segment on the left arm of chromosome XV from Saccharomyces cerevisiae includes part of the IRA2 gene and a putative new gene.</title>
        <authorList>
            <person name="Zumstein E."/>
            <person name="Griffin H."/>
            <person name="Schweizer M."/>
        </authorList>
    </citation>
    <scope>NUCLEOTIDE SEQUENCE [GENOMIC DNA] OF 1-2423</scope>
    <source>
        <strain>ATCC 96604 / S288c / FY1679</strain>
    </source>
</reference>
<reference key="5">
    <citation type="journal article" date="1995" name="Yeast">
        <title>A 29.425 kb segment on the left arm of yeast chromosome XV contains more than twice as many unknown as known open reading frames.</title>
        <authorList>
            <person name="Zumstein E."/>
            <person name="Pearson B.M."/>
            <person name="Kalogeropoulos A."/>
            <person name="Schweizer M."/>
        </authorList>
    </citation>
    <scope>NUCLEOTIDE SEQUENCE [GENOMIC DNA] OF 1-2423</scope>
    <source>
        <strain>ATCC 96604 / S288c / FY1679</strain>
    </source>
</reference>
<reference key="6">
    <citation type="journal article" date="1997" name="Yeast">
        <title>Sequence analysis of a 33.2 kb segment from the left arm of yeast chromosome XV reveals eight known genes and ten new open reading frames including homologues of ABC transporters, inositol phosphatases and human expressed sequence tags.</title>
        <authorList>
            <person name="Tzermia M."/>
            <person name="Katsoulou C."/>
            <person name="Alexandraki D."/>
        </authorList>
    </citation>
    <scope>NUCLEOTIDE SEQUENCE [GENOMIC DNA] OF 1982-3079</scope>
</reference>
<reference key="7">
    <citation type="journal article" date="1992" name="Curr. Genet.">
        <title>The CCS1 gene from Saccharomyces cerevisiae which is involved in mitochondrial functions is identified as IRA2 an attenuator of RAS1 and RAS2 gene products.</title>
        <authorList>
            <person name="Bussereau F."/>
            <person name="Dupont C.H."/>
            <person name="Boy-Marcotte E."/>
            <person name="Mallet L."/>
            <person name="Jacquet M."/>
        </authorList>
    </citation>
    <scope>IDENTIFICATION OF CCS1 AS IRA2</scope>
</reference>
<reference key="8">
    <citation type="journal article" date="2003" name="Nature">
        <title>Global analysis of protein localization in budding yeast.</title>
        <authorList>
            <person name="Huh W.-K."/>
            <person name="Falvo J.V."/>
            <person name="Gerke L.C."/>
            <person name="Carroll A.S."/>
            <person name="Howson R.W."/>
            <person name="Weissman J.S."/>
            <person name="O'Shea E.K."/>
        </authorList>
    </citation>
    <scope>SUBCELLULAR LOCATION [LARGE SCALE ANALYSIS]</scope>
</reference>
<reference key="9">
    <citation type="journal article" date="2007" name="Proc. Natl. Acad. Sci. U.S.A.">
        <title>Analysis of phosphorylation sites on proteins from Saccharomyces cerevisiae by electron transfer dissociation (ETD) mass spectrometry.</title>
        <authorList>
            <person name="Chi A."/>
            <person name="Huttenhower C."/>
            <person name="Geer L.Y."/>
            <person name="Coon J.J."/>
            <person name="Syka J.E.P."/>
            <person name="Bai D.L."/>
            <person name="Shabanowitz J."/>
            <person name="Burke D.J."/>
            <person name="Troyanskaya O.G."/>
            <person name="Hunt D.F."/>
        </authorList>
    </citation>
    <scope>IDENTIFICATION BY MASS SPECTROMETRY [LARGE SCALE ANALYSIS]</scope>
</reference>
<reference key="10">
    <citation type="journal article" date="2008" name="Mol. Cell. Proteomics">
        <title>A multidimensional chromatography technology for in-depth phosphoproteome analysis.</title>
        <authorList>
            <person name="Albuquerque C.P."/>
            <person name="Smolka M.B."/>
            <person name="Payne S.H."/>
            <person name="Bafna V."/>
            <person name="Eng J."/>
            <person name="Zhou H."/>
        </authorList>
    </citation>
    <scope>IDENTIFICATION BY MASS SPECTROMETRY [LARGE SCALE ANALYSIS]</scope>
</reference>
<reference key="11">
    <citation type="journal article" date="2009" name="Science">
        <title>Global analysis of Cdk1 substrate phosphorylation sites provides insights into evolution.</title>
        <authorList>
            <person name="Holt L.J."/>
            <person name="Tuch B.B."/>
            <person name="Villen J."/>
            <person name="Johnson A.D."/>
            <person name="Gygi S.P."/>
            <person name="Morgan D.O."/>
        </authorList>
    </citation>
    <scope>PHOSPHORYLATION [LARGE SCALE ANALYSIS] AT THR-635</scope>
    <scope>IDENTIFICATION BY MASS SPECTROMETRY [LARGE SCALE ANALYSIS]</scope>
</reference>
<dbReference type="EMBL" id="M33779">
    <property type="protein sequence ID" value="AAA34710.1"/>
    <property type="molecule type" value="Genomic_DNA"/>
</dbReference>
<dbReference type="EMBL" id="Z74823">
    <property type="protein sequence ID" value="CAA99093.1"/>
    <property type="molecule type" value="Genomic_DNA"/>
</dbReference>
<dbReference type="EMBL" id="X75449">
    <property type="protein sequence ID" value="CAA53202.1"/>
    <property type="molecule type" value="Genomic_DNA"/>
</dbReference>
<dbReference type="EMBL" id="X83121">
    <property type="protein sequence ID" value="CAA58201.1"/>
    <property type="molecule type" value="Genomic_DNA"/>
</dbReference>
<dbReference type="EMBL" id="Z74822">
    <property type="protein sequence ID" value="CAA99092.1"/>
    <property type="molecule type" value="Genomic_DNA"/>
</dbReference>
<dbReference type="EMBL" id="BK006948">
    <property type="protein sequence ID" value="DAA10703.1"/>
    <property type="molecule type" value="Genomic_DNA"/>
</dbReference>
<dbReference type="PIR" id="S66775">
    <property type="entry name" value="RGBYI2"/>
</dbReference>
<dbReference type="RefSeq" id="NP_014560.1">
    <property type="nucleotide sequence ID" value="NM_001183335.1"/>
</dbReference>
<dbReference type="SMR" id="P19158"/>
<dbReference type="BioGRID" id="34321">
    <property type="interactions" value="1003"/>
</dbReference>
<dbReference type="DIP" id="DIP-6376N"/>
<dbReference type="FunCoup" id="P19158">
    <property type="interactions" value="198"/>
</dbReference>
<dbReference type="IntAct" id="P19158">
    <property type="interactions" value="9"/>
</dbReference>
<dbReference type="MINT" id="P19158"/>
<dbReference type="STRING" id="4932.YOL081W"/>
<dbReference type="iPTMnet" id="P19158"/>
<dbReference type="PaxDb" id="4932-YOL081W"/>
<dbReference type="PeptideAtlas" id="P19158"/>
<dbReference type="EnsemblFungi" id="YOL081W_mRNA">
    <property type="protein sequence ID" value="YOL081W"/>
    <property type="gene ID" value="YOL081W"/>
</dbReference>
<dbReference type="GeneID" id="854073"/>
<dbReference type="KEGG" id="sce:YOL081W"/>
<dbReference type="AGR" id="SGD:S000005441"/>
<dbReference type="SGD" id="S000005441">
    <property type="gene designation" value="IRA2"/>
</dbReference>
<dbReference type="VEuPathDB" id="FungiDB:YOL081W"/>
<dbReference type="eggNOG" id="KOG1826">
    <property type="taxonomic scope" value="Eukaryota"/>
</dbReference>
<dbReference type="GeneTree" id="ENSGT00940000176574"/>
<dbReference type="HOGENOM" id="CLU_000439_0_0_1"/>
<dbReference type="InParanoid" id="P19158"/>
<dbReference type="OMA" id="SWSELMI"/>
<dbReference type="OrthoDB" id="28245at2759"/>
<dbReference type="BioCyc" id="YEAST:G3O-33484-MONOMER"/>
<dbReference type="Reactome" id="R-SCE-9696273">
    <property type="pathway name" value="RND1 GTPase cycle"/>
</dbReference>
<dbReference type="BioGRID-ORCS" id="854073">
    <property type="hits" value="0 hits in 10 CRISPR screens"/>
</dbReference>
<dbReference type="CD-CODE" id="E03F929F">
    <property type="entry name" value="Stress granule"/>
</dbReference>
<dbReference type="PRO" id="PR:P19158"/>
<dbReference type="Proteomes" id="UP000002311">
    <property type="component" value="Chromosome XV"/>
</dbReference>
<dbReference type="RNAct" id="P19158">
    <property type="molecule type" value="protein"/>
</dbReference>
<dbReference type="GO" id="GO:0005737">
    <property type="term" value="C:cytoplasm"/>
    <property type="evidence" value="ECO:0007005"/>
    <property type="project" value="SGD"/>
</dbReference>
<dbReference type="GO" id="GO:0005829">
    <property type="term" value="C:cytosol"/>
    <property type="evidence" value="ECO:0007005"/>
    <property type="project" value="SGD"/>
</dbReference>
<dbReference type="GO" id="GO:0005789">
    <property type="term" value="C:endoplasmic reticulum membrane"/>
    <property type="evidence" value="ECO:0000314"/>
    <property type="project" value="SGD"/>
</dbReference>
<dbReference type="GO" id="GO:0005739">
    <property type="term" value="C:mitochondrion"/>
    <property type="evidence" value="ECO:0000314"/>
    <property type="project" value="SGD"/>
</dbReference>
<dbReference type="GO" id="GO:0005096">
    <property type="term" value="F:GTPase activator activity"/>
    <property type="evidence" value="ECO:0000314"/>
    <property type="project" value="SGD"/>
</dbReference>
<dbReference type="GO" id="GO:0007193">
    <property type="term" value="P:adenylate cyclase-inhibiting G protein-coupled receptor signaling pathway"/>
    <property type="evidence" value="ECO:0000315"/>
    <property type="project" value="SGD"/>
</dbReference>
<dbReference type="GO" id="GO:0046580">
    <property type="term" value="P:negative regulation of Ras protein signal transduction"/>
    <property type="evidence" value="ECO:0000315"/>
    <property type="project" value="SGD"/>
</dbReference>
<dbReference type="CDD" id="cd05392">
    <property type="entry name" value="RasGAP_Neurofibromin_like"/>
    <property type="match status" value="1"/>
</dbReference>
<dbReference type="FunFam" id="1.10.506.10:FF:000034">
    <property type="entry name" value="IRA1p GTPase-activating protein"/>
    <property type="match status" value="1"/>
</dbReference>
<dbReference type="Gene3D" id="3.40.525.10">
    <property type="entry name" value="CRAL-TRIO lipid binding domain"/>
    <property type="match status" value="1"/>
</dbReference>
<dbReference type="Gene3D" id="1.10.506.10">
    <property type="entry name" value="GTPase Activation - p120gap, domain 1"/>
    <property type="match status" value="1"/>
</dbReference>
<dbReference type="InterPro" id="IPR036865">
    <property type="entry name" value="CRAL-TRIO_dom_sf"/>
</dbReference>
<dbReference type="InterPro" id="IPR039360">
    <property type="entry name" value="Ras_GTPase"/>
</dbReference>
<dbReference type="InterPro" id="IPR023152">
    <property type="entry name" value="RasGAP_CS"/>
</dbReference>
<dbReference type="InterPro" id="IPR001936">
    <property type="entry name" value="RasGAP_dom"/>
</dbReference>
<dbReference type="InterPro" id="IPR008936">
    <property type="entry name" value="Rho_GTPase_activation_prot"/>
</dbReference>
<dbReference type="PANTHER" id="PTHR10194:SF142">
    <property type="entry name" value="NEUROFIBROMIN"/>
    <property type="match status" value="1"/>
</dbReference>
<dbReference type="PANTHER" id="PTHR10194">
    <property type="entry name" value="RAS GTPASE-ACTIVATING PROTEINS"/>
    <property type="match status" value="1"/>
</dbReference>
<dbReference type="Pfam" id="PF00616">
    <property type="entry name" value="RasGAP"/>
    <property type="match status" value="2"/>
</dbReference>
<dbReference type="SMART" id="SM00323">
    <property type="entry name" value="RasGAP"/>
    <property type="match status" value="1"/>
</dbReference>
<dbReference type="SUPFAM" id="SSF48350">
    <property type="entry name" value="GTPase activation domain, GAP"/>
    <property type="match status" value="1"/>
</dbReference>
<dbReference type="PROSITE" id="PS00509">
    <property type="entry name" value="RAS_GTPASE_ACTIV_1"/>
    <property type="match status" value="1"/>
</dbReference>
<dbReference type="PROSITE" id="PS50018">
    <property type="entry name" value="RAS_GTPASE_ACTIV_2"/>
    <property type="match status" value="1"/>
</dbReference>
<name>IRA2_YEAST</name>
<accession>P19158</accession>
<accession>D6W1Y7</accession>
<accession>O13592</accession>
<accession>Q08239</accession>
<keyword id="KW-0963">Cytoplasm</keyword>
<keyword id="KW-0343">GTPase activation</keyword>
<keyword id="KW-0597">Phosphoprotein</keyword>
<keyword id="KW-1185">Reference proteome</keyword>
<proteinExistence type="evidence at protein level"/>
<organism>
    <name type="scientific">Saccharomyces cerevisiae (strain ATCC 204508 / S288c)</name>
    <name type="common">Baker's yeast</name>
    <dbReference type="NCBI Taxonomy" id="559292"/>
    <lineage>
        <taxon>Eukaryota</taxon>
        <taxon>Fungi</taxon>
        <taxon>Dikarya</taxon>
        <taxon>Ascomycota</taxon>
        <taxon>Saccharomycotina</taxon>
        <taxon>Saccharomycetes</taxon>
        <taxon>Saccharomycetales</taxon>
        <taxon>Saccharomycetaceae</taxon>
        <taxon>Saccharomyces</taxon>
    </lineage>
</organism>
<protein>
    <recommendedName>
        <fullName>Inhibitory regulator protein IRA2</fullName>
    </recommendedName>
</protein>
<sequence length="3079" mass="351669">MSQPTKNKKKEHGTDSKSSRMTRTLVNHILFERILPILPVESNLSTYSEVEEYSSFISCRSVLINVTVSRDANAMVEGTLELIESLLQGHEIISDKGSSDVIESILIILRLLSDALEYNWQNQESLHYNDISTHVEHDQEQKYRPKLNSILPDYSSTHSNGNKHFFHQSKPQALIPELASKLLESCAKLKFNTRTLQILQNMISHVHGNILTTLSSSILPRHKSYLTRHNHPSHCKMIDSTLGHILRFVAASNPSEYFEFIRKSVQVPVTQTHTHSHSHSHSLPSSVYNSIVPHFDLFSFIYLSKHNFKKYLELIKNLSVTLRKTIYHCLLLHYSAKAIMFWIMARPAEYYELFNLLKDNNNEHSKSLNTLNHTLFEEIHSTFNVNSMITTNQNAHQGSSSPSSSSPSSPPSSSSSDNNNQNIIAKSLSRQLSHHQSYIQQQSERKLHSSWTTNSQSSTSLSSSTSNSTTTDFSTHTQPGEYDPSLPDTPTMSNITISASSLLSQTPTPTTQLQQRLNSAAAAAAAAASPSNSTPTGYTAEQQSRASYDAHKTGHTGKDYDEHFLSVTRLDNVLELYTHFDDTEVLPHTSVLKFLTTLTMFDIDLFNELNATSFKYIPDCTMHRPKERTSSFNNTAHETGSEKTSGIKHITQGLKKLTSLPSSTKKTVKFVKMLLRNLNGNQAVSDVALLDTMRALLSFFTMTSAVFLVDRNLPSVLFAKRLIPIMGTNLSVGQDWNSKINNSLMVCLKKNSTTFVQLQLIFFSSAIQFDHELLLARLSIDTMANNLNMQKLCLYTEGFRIFFDIPSKKELRKAIAVKISKFFKTLFSIIADILLQEFPYFDEQITDIVASILDGTIINEYGTKKHFKGSSPSLCSTTRSRSGSTSQSSMTPVSPLGLDTDICPMNTLSLVGSSTSRNSDNVNSLNSSPKNLSSDPYLSHLVAPRARHALGGPSSIIRNKIPTTLTSPPGTEKSSPVQRPQTESISATPMAITNSTPLSSAAFGIRSPLQKIRTRRYSDESLGKFMKSTNNYIQEHLIPKDLNEATLQDARRIMINIFSIFKRPNSYFIIPHNINSNLQWVSQDFRNIMKPIFVAIVSPDVDLQNTAQSFMDTLLSNVITYGESDENISIEGYHLLCSYTVTLFAMGLFDLKINNEKRQILLDITVKFMKVRSHLAGIAEASHHMEYISDSEKLTFPLIMGTVGRALFVSLYSSQQKIEKTLKIAYTEYLSAINFHERNIDDADKTWVHNIEFVEAMCHDNYTTSGSIAFQRRTRNNILRFATIPNAILLDSMRMIYKKWHTYTHSKSLEKQERNDFRNFAGILASLSGILFINKKILQEMYPYLLDTVSELKKNIDSFISKQCQWLNYPDLLTRENSRDILSVELHPLSFNLLFNNLRLKLKELACSDLSIPENESSYVLLEQIIKMLRTILGRDDDNYVMMLFSTEIVDLIDLLTDEIKKIPAYCPKYLKAIIQMTKMFSALQHSEVNLGVKNHFHVKNKWLRQITDWFQVSIAREYDFENLSKPLKEMDLVKRDMDILYIDTAIEASTAIAYLTRHTFLEIPPAASDPELSRSRSVIFGFYFNILMKGLEKSSDRDNYPVFLRHKMSVLNDNVILSLTNLSNTNVDASLQFTLPMGYSGNRNIRNAFLEVFINIVTNYRTYTAKTDLGKLEAADKFLRYTIEHPQLSSFGAAVCPASDIDAYAAGLINAFETRNATHIVVAQLIKNEIEKSSRPTDILRRNSCATRSLSMLARSKGNEYLIRTLQPLLKKIIQNRDFFEIEKLKPEDSDAERQIELFVKYMNELLESISNSVSYFPPPLFYICQNIYKVACEKFPDHAIIAAGSFVFLRFFCPALVSPDSENIIDISHLSEKRTFISLAKVIQNIANGSENFSRWPALCSQKDFLKECSDRIFRFLAELCRTDRTIDIQVRTDPTPIAFDYQFLHSFVYLYGLEVRRNVLNEAKHDDGDIDGDDFYKTTFLLIDDVLGQLGQPKMEFSNEIPIYIREHMDDYPELYEFMNRHAFRNIETSTAYSPSVHESTSSEGIPIITLTMSNFSDRHVDIDTVAYKFLQIYARIWTTKHCLIIDCTEFDEGGLDMRKFISLVMGLLPEVAPKNCIGCYYFNVNETFMDNYGKCLDKDNVYVSSKIPHYFINSNSDEGLMKSVGITGQGLKVLQDIRVSLHDITLYDEKRNRFTPVSLKIGDIYFQVLHETPRQYKIRDMGTLFDVKFNDVYEISRIFEVHVSSITGVAAEFTVTFQDERRLIFSSPKYLEIVKMFYYAQIRLESEYEMDNNSSTSSPNSNNKDKQQKERTKLLCHLLLVSLIGLFDESKKMKNSSYNLIAATEASFGLNFGSHFHRSPEVYVPEDTTTFLGVIGKSLAESNPELTAYMFIYVLEALKNNVIPHVYIPHTICGLSYWIPNLYQHVYLADDEEGPENISHIFRILIRLSVRETDFKAVYMQYVWLLLLDDGRLTDIIVDEVINHALERDSENRDWKKTISLLTVLPTTEVANNIIQKILAKIRSFLPSLKLEAMTQSWSELTILVKISIHVFFETSLLVQMYLPEILFIVSLLIDVGPRELRSSLHQLLMNVCHSLAINSALPQDHRNNLDEISDIFAHQKVKFMFGFSEDKGRILQIFSASSFASKFNILDFFINNILLLMEYSSTYEANVWKTRYKKYVLESVFTSNSFLSARSIMIVGIMGKSYITEGLCKAMLIETMKVIAEPKITDEHLFLAISHIFTYSKIVEGLDPNLDLMKHLFWFSTLFLESRHPIIFEGALLFVSNCIRRLYMAQFENESETSLISTLLKGRKFAHTFLSKIENLSGIVWNEDNFTHILIFIINKGLSNPFIKSTAFDFLKMMFRNSYFEHQINQKSDHYLCYMFLLYFVLNCNQFEELLGDVDFEGEMVNIENKNTIPKILLEWLSSDNENANITLYQGAILFKCSVTDEPSRFRFALIIRHLLTKKPICALRFYSVIRNEIRKISAFEQNSDCVPLAFDILNLLVTHSESNSLEKLHEESIERLTKRGLSIVTSSGIFAKNSDMMIPLDVKPEDIYERKRIMTMILSRMSCSA</sequence>